<dbReference type="EMBL" id="CP000806">
    <property type="protein sequence ID" value="ACB53480.1"/>
    <property type="molecule type" value="Genomic_DNA"/>
</dbReference>
<dbReference type="RefSeq" id="WP_009543788.1">
    <property type="nucleotide sequence ID" value="NC_010546.1"/>
</dbReference>
<dbReference type="STRING" id="43989.cce_4132"/>
<dbReference type="KEGG" id="cyt:cce_4132"/>
<dbReference type="eggNOG" id="COG1333">
    <property type="taxonomic scope" value="Bacteria"/>
</dbReference>
<dbReference type="HOGENOM" id="CLU_034630_0_0_3"/>
<dbReference type="OrthoDB" id="9770923at2"/>
<dbReference type="Proteomes" id="UP000001203">
    <property type="component" value="Chromosome circular"/>
</dbReference>
<dbReference type="GO" id="GO:0031676">
    <property type="term" value="C:plasma membrane-derived thylakoid membrane"/>
    <property type="evidence" value="ECO:0007669"/>
    <property type="project" value="UniProtKB-SubCell"/>
</dbReference>
<dbReference type="GO" id="GO:0017004">
    <property type="term" value="P:cytochrome complex assembly"/>
    <property type="evidence" value="ECO:0007669"/>
    <property type="project" value="UniProtKB-UniRule"/>
</dbReference>
<dbReference type="HAMAP" id="MF_01392">
    <property type="entry name" value="CytC_Ccs1"/>
    <property type="match status" value="1"/>
</dbReference>
<dbReference type="InterPro" id="IPR023494">
    <property type="entry name" value="Cyt_c_bgen_Ccs1/CcsB/ResB"/>
</dbReference>
<dbReference type="InterPro" id="IPR007816">
    <property type="entry name" value="ResB-like_domain"/>
</dbReference>
<dbReference type="PANTHER" id="PTHR31566">
    <property type="entry name" value="CYTOCHROME C BIOGENESIS PROTEIN CCS1, CHLOROPLASTIC"/>
    <property type="match status" value="1"/>
</dbReference>
<dbReference type="PANTHER" id="PTHR31566:SF0">
    <property type="entry name" value="CYTOCHROME C BIOGENESIS PROTEIN CCS1, CHLOROPLASTIC"/>
    <property type="match status" value="1"/>
</dbReference>
<dbReference type="Pfam" id="PF05140">
    <property type="entry name" value="ResB"/>
    <property type="match status" value="2"/>
</dbReference>
<proteinExistence type="inferred from homology"/>
<name>CCS1_CROS5</name>
<reference key="1">
    <citation type="journal article" date="2008" name="Proc. Natl. Acad. Sci. U.S.A.">
        <title>The genome of Cyanothece 51142, a unicellular diazotrophic cyanobacterium important in the marine nitrogen cycle.</title>
        <authorList>
            <person name="Welsh E.A."/>
            <person name="Liberton M."/>
            <person name="Stoeckel J."/>
            <person name="Loh T."/>
            <person name="Elvitigala T."/>
            <person name="Wang C."/>
            <person name="Wollam A."/>
            <person name="Fulton R.S."/>
            <person name="Clifton S.W."/>
            <person name="Jacobs J.M."/>
            <person name="Aurora R."/>
            <person name="Ghosh B.K."/>
            <person name="Sherman L.A."/>
            <person name="Smith R.D."/>
            <person name="Wilson R.K."/>
            <person name="Pakrasi H.B."/>
        </authorList>
    </citation>
    <scope>NUCLEOTIDE SEQUENCE [LARGE SCALE GENOMIC DNA]</scope>
    <source>
        <strain>ATCC 51142 / BH68</strain>
    </source>
</reference>
<protein>
    <recommendedName>
        <fullName evidence="1">Cytochrome c biogenesis protein CcsB</fullName>
    </recommendedName>
</protein>
<organism>
    <name type="scientific">Crocosphaera subtropica (strain ATCC 51142 / BH68)</name>
    <name type="common">Cyanothece sp. (strain ATCC 51142)</name>
    <dbReference type="NCBI Taxonomy" id="43989"/>
    <lineage>
        <taxon>Bacteria</taxon>
        <taxon>Bacillati</taxon>
        <taxon>Cyanobacteriota</taxon>
        <taxon>Cyanophyceae</taxon>
        <taxon>Oscillatoriophycideae</taxon>
        <taxon>Chroococcales</taxon>
        <taxon>Aphanothecaceae</taxon>
        <taxon>Crocosphaera</taxon>
        <taxon>Crocosphaera subtropica</taxon>
    </lineage>
</organism>
<comment type="function">
    <text evidence="1">Required during biogenesis of c-type cytochromes (cytochrome c6 and cytochrome f) at the step of heme attachment.</text>
</comment>
<comment type="subunit">
    <text evidence="1">May interact with CcsA.</text>
</comment>
<comment type="subcellular location">
    <subcellularLocation>
        <location evidence="1">Cellular thylakoid membrane</location>
        <topology evidence="1">Multi-pass membrane protein</topology>
    </subcellularLocation>
</comment>
<comment type="similarity">
    <text evidence="1">Belongs to the Ccs1/CcsB family.</text>
</comment>
<feature type="chain" id="PRO_0000363612" description="Cytochrome c biogenesis protein CcsB">
    <location>
        <begin position="1"/>
        <end position="451"/>
    </location>
</feature>
<feature type="transmembrane region" description="Helical" evidence="1">
    <location>
        <begin position="30"/>
        <end position="50"/>
    </location>
</feature>
<feature type="transmembrane region" description="Helical" evidence="1">
    <location>
        <begin position="89"/>
        <end position="109"/>
    </location>
</feature>
<feature type="transmembrane region" description="Helical" evidence="1">
    <location>
        <begin position="175"/>
        <end position="195"/>
    </location>
</feature>
<accession>B1WRN9</accession>
<gene>
    <name evidence="1" type="primary">ccsB</name>
    <name evidence="1" type="synonym">ccs1</name>
    <name type="ordered locus">cce_4132</name>
</gene>
<keyword id="KW-0201">Cytochrome c-type biogenesis</keyword>
<keyword id="KW-0472">Membrane</keyword>
<keyword id="KW-1185">Reference proteome</keyword>
<keyword id="KW-0793">Thylakoid</keyword>
<keyword id="KW-0812">Transmembrane</keyword>
<keyword id="KW-1133">Transmembrane helix</keyword>
<sequence length="451" mass="50556">MTISDSPQTPENLSLPKQGFRQLIKIVADLRLAIVLLLAIALFSISGTVIEQGETISFYQQNYPEDPALFGFLTWKVILILGLNHVYTTWWFLSLLVLFGTSLTTCTFTRQFPALKAARKWNFYQKARQFEKLALSTELAINDLKFVNNLLEQKGYKTFQENQAIYARKGIIGKIGPIVVHAAMLIILGGAIWGALTGFLAQAMVPTGSEFKVNNIIEAGPLSQPQIPKDWGIRVNRFWIDYTPDGTIDQFYSDLSVINNDGEELKHKTIYVNEPLRYHGVTFYQTDWGIAGVQAQVNNSPIFQLPMALLNTNGNGRIWGTWIPTKPDLSEGVSLLAKDLQGTMMVYDQKGDLYSAVRPGMILDINGVRLKIYQLIGSTGLQIKADPGIPFVYTGFGLLMMGVIMSYVSHSQIWVLQEDEHCYIGGKTNRSQVTFERELLGIIESLEPEKT</sequence>
<evidence type="ECO:0000255" key="1">
    <source>
        <dbReference type="HAMAP-Rule" id="MF_01392"/>
    </source>
</evidence>